<proteinExistence type="evidence at protein level"/>
<organism>
    <name type="scientific">Aspergillus flavus (strain ATCC 200026 / FGSC A1120 / IAM 13836 / NRRL 3357 / JCM 12722 / SRRC 167)</name>
    <dbReference type="NCBI Taxonomy" id="332952"/>
    <lineage>
        <taxon>Eukaryota</taxon>
        <taxon>Fungi</taxon>
        <taxon>Dikarya</taxon>
        <taxon>Ascomycota</taxon>
        <taxon>Pezizomycotina</taxon>
        <taxon>Eurotiomycetes</taxon>
        <taxon>Eurotiomycetidae</taxon>
        <taxon>Eurotiales</taxon>
        <taxon>Aspergillaceae</taxon>
        <taxon>Aspergillus</taxon>
        <taxon>Aspergillus subgen. Circumdati</taxon>
    </lineage>
</organism>
<accession>B8NHE1</accession>
<evidence type="ECO:0000269" key="1">
    <source>
    </source>
</evidence>
<evidence type="ECO:0000269" key="2">
    <source>
    </source>
</evidence>
<evidence type="ECO:0000303" key="3">
    <source>
    </source>
</evidence>
<evidence type="ECO:0000305" key="4"/>
<evidence type="ECO:0007829" key="5">
    <source>
        <dbReference type="PDB" id="8D7F"/>
    </source>
</evidence>
<protein>
    <recommendedName>
        <fullName evidence="3">Terpene cyclase-like protein flvF</fullName>
        <ecNumber evidence="1">4.2.3.-</ecNumber>
    </recommendedName>
    <alternativeName>
        <fullName evidence="3">Flavunoidine biosynthesis cluster protein F</fullName>
    </alternativeName>
</protein>
<dbReference type="EC" id="4.2.3.-" evidence="1"/>
<dbReference type="EMBL" id="EQ963478">
    <property type="protein sequence ID" value="EED50783.1"/>
    <property type="molecule type" value="Genomic_DNA"/>
</dbReference>
<dbReference type="RefSeq" id="XP_002379559.1">
    <property type="nucleotide sequence ID" value="XM_002379518.1"/>
</dbReference>
<dbReference type="PDB" id="8D7F">
    <property type="method" value="X-ray"/>
    <property type="resolution" value="2.62 A"/>
    <property type="chains" value="A/B/C/D/E/F/G/H=2-366"/>
</dbReference>
<dbReference type="PDBsum" id="8D7F"/>
<dbReference type="SMR" id="B8NHE1"/>
<dbReference type="STRING" id="332952.B8NHE1"/>
<dbReference type="EnsemblFungi" id="EED50783">
    <property type="protein sequence ID" value="EED50783"/>
    <property type="gene ID" value="AFLA_135460"/>
</dbReference>
<dbReference type="VEuPathDB" id="FungiDB:AFLA_005900"/>
<dbReference type="HOGENOM" id="CLU_763099_0_0_1"/>
<dbReference type="OMA" id="WPKILEN"/>
<dbReference type="UniPathway" id="UPA00213"/>
<dbReference type="GO" id="GO:0016829">
    <property type="term" value="F:lyase activity"/>
    <property type="evidence" value="ECO:0007669"/>
    <property type="project" value="UniProtKB-KW"/>
</dbReference>
<dbReference type="GO" id="GO:0016114">
    <property type="term" value="P:terpenoid biosynthetic process"/>
    <property type="evidence" value="ECO:0007669"/>
    <property type="project" value="UniProtKB-UniPathway"/>
</dbReference>
<dbReference type="Gene3D" id="1.10.600.10">
    <property type="entry name" value="Farnesyl Diphosphate Synthase"/>
    <property type="match status" value="1"/>
</dbReference>
<dbReference type="InterPro" id="IPR008949">
    <property type="entry name" value="Isoprenoid_synthase_dom_sf"/>
</dbReference>
<dbReference type="Pfam" id="PF19086">
    <property type="entry name" value="Terpene_syn_C_2"/>
    <property type="match status" value="1"/>
</dbReference>
<dbReference type="SUPFAM" id="SSF48576">
    <property type="entry name" value="Terpenoid synthases"/>
    <property type="match status" value="1"/>
</dbReference>
<keyword id="KW-0002">3D-structure</keyword>
<keyword id="KW-0456">Lyase</keyword>
<feature type="chain" id="PRO_0000454482" description="Terpene cyclase-like protein flvF">
    <location>
        <begin position="1"/>
        <end position="366"/>
    </location>
</feature>
<feature type="strand" evidence="5">
    <location>
        <begin position="7"/>
        <end position="11"/>
    </location>
</feature>
<feature type="strand" evidence="5">
    <location>
        <begin position="14"/>
        <end position="16"/>
    </location>
</feature>
<feature type="strand" evidence="5">
    <location>
        <begin position="30"/>
        <end position="32"/>
    </location>
</feature>
<feature type="helix" evidence="5">
    <location>
        <begin position="35"/>
        <end position="50"/>
    </location>
</feature>
<feature type="helix" evidence="5">
    <location>
        <begin position="52"/>
        <end position="54"/>
    </location>
</feature>
<feature type="helix" evidence="5">
    <location>
        <begin position="68"/>
        <end position="72"/>
    </location>
</feature>
<feature type="turn" evidence="5">
    <location>
        <begin position="73"/>
        <end position="75"/>
    </location>
</feature>
<feature type="helix" evidence="5">
    <location>
        <begin position="78"/>
        <end position="91"/>
    </location>
</feature>
<feature type="turn" evidence="5">
    <location>
        <begin position="92"/>
        <end position="96"/>
    </location>
</feature>
<feature type="helix" evidence="5">
    <location>
        <begin position="98"/>
        <end position="104"/>
    </location>
</feature>
<feature type="helix" evidence="5">
    <location>
        <begin position="118"/>
        <end position="120"/>
    </location>
</feature>
<feature type="helix" evidence="5">
    <location>
        <begin position="123"/>
        <end position="143"/>
    </location>
</feature>
<feature type="turn" evidence="5">
    <location>
        <begin position="145"/>
        <end position="147"/>
    </location>
</feature>
<feature type="helix" evidence="5">
    <location>
        <begin position="148"/>
        <end position="159"/>
    </location>
</feature>
<feature type="helix" evidence="5">
    <location>
        <begin position="165"/>
        <end position="167"/>
    </location>
</feature>
<feature type="turn" evidence="5">
    <location>
        <begin position="168"/>
        <end position="170"/>
    </location>
</feature>
<feature type="helix" evidence="5">
    <location>
        <begin position="174"/>
        <end position="184"/>
    </location>
</feature>
<feature type="helix" evidence="5">
    <location>
        <begin position="187"/>
        <end position="197"/>
    </location>
</feature>
<feature type="helix" evidence="5">
    <location>
        <begin position="204"/>
        <end position="239"/>
    </location>
</feature>
<feature type="strand" evidence="5">
    <location>
        <begin position="242"/>
        <end position="244"/>
    </location>
</feature>
<feature type="helix" evidence="5">
    <location>
        <begin position="249"/>
        <end position="257"/>
    </location>
</feature>
<feature type="helix" evidence="5">
    <location>
        <begin position="261"/>
        <end position="289"/>
    </location>
</feature>
<feature type="helix" evidence="5">
    <location>
        <begin position="292"/>
        <end position="294"/>
    </location>
</feature>
<feature type="helix" evidence="5">
    <location>
        <begin position="297"/>
        <end position="317"/>
    </location>
</feature>
<feature type="turn" evidence="5">
    <location>
        <begin position="321"/>
        <end position="323"/>
    </location>
</feature>
<feature type="helix" evidence="5">
    <location>
        <begin position="327"/>
        <end position="331"/>
    </location>
</feature>
<feature type="helix" evidence="5">
    <location>
        <begin position="332"/>
        <end position="340"/>
    </location>
</feature>
<feature type="strand" evidence="5">
    <location>
        <begin position="353"/>
        <end position="356"/>
    </location>
</feature>
<feature type="strand" evidence="5">
    <location>
        <begin position="359"/>
        <end position="361"/>
    </location>
</feature>
<gene>
    <name evidence="3" type="primary">flvF</name>
    <name type="ORF">AFLA_135460</name>
</gene>
<comment type="function">
    <text evidence="1">Terpene cyclase-like protein; part of the gene cluster that mediates the biosynthesis of flavunoidine, an alkaloidal terpenoid with a tetracyclic cage-like core connected to dimethylcadaverine via a C-N bond and acylated with 5,5-dimethyl-L-pipecolate (PubMed:31885262). The tetracyclic core is synthesized by the terpene cyclase flvE and the cytochrome P450 monooxygenase flvD (PubMed:31885262). The terpene cyclase flvE catalyzes the cyclization of farnesyl pyrophosphate (FPP) to form (1R,4R,5S)-(+)-acoradiene and the cytochrome P450 monooxygenase flvD is then responsible for oxidative conversion of (1R,4R,5S)-(+)-acoradiene into the tetracyclic cage present in the final product flavunoidine (PubMed:31885262). In parallel, the N-methyltransferase flvH dimethylates L-lysine to give N,N-dimethyl-L-Lysin which is decarboxylated by flvG to afford dimethylcadaverine (PubMed:31885262). The terpene cyclase-like protein flvF is the enzyme that attaches the dimethylcadaverine precusor at the C-7 of the tetracyclic cage to yield pre-flavunoidine (PubMed:31885262). The cytochrome monooxygenase flvC hydroxylates the C-10 position of pre-flavunoidine whereas the NRPS flvI acylates the terpenoid core at the hydroxylated C-10 with dimethylpipecolate to yield final flavunoidine (PubMed:31885262). The bifunctional enzyme flvA and the dehydrogenase flvB are responsible for the synthesis of the dimethylpipecolate precursor (PubMed:31885262). The PLP-dependent lyase domain of flvA might use L-O-acetyl-homoserine and alpha-keto-isovalerate to form an intermediary ketone that can cyclize intramolecularly to yield an imine (PubMed:31885262). The imine can be reduced by flvB to yield the 6-carboxylated pipecolate (PubMed:31885262). The C-terminal alpha-KG-dependent oxygenase domain of flvA is then proposed to catalyze the decarboxylation to yield dimethylpipecolate (PubMed:31885262).</text>
</comment>
<comment type="catalytic activity">
    <reaction evidence="1">
        <text>N,N-dimethyl-cadaverine + 2,6,9-trimethyl-13-oxatetracyclo[6.3.1.1(6,9).0(1,5)]tridecane carbocation = pre-flavunoidine + H(+)</text>
        <dbReference type="Rhea" id="RHEA:77079"/>
        <dbReference type="ChEBI" id="CHEBI:15378"/>
        <dbReference type="ChEBI" id="CHEBI:193108"/>
        <dbReference type="ChEBI" id="CHEBI:194090"/>
        <dbReference type="ChEBI" id="CHEBI:195527"/>
    </reaction>
    <physiologicalReaction direction="left-to-right" evidence="1">
        <dbReference type="Rhea" id="RHEA:77080"/>
    </physiologicalReaction>
</comment>
<comment type="pathway">
    <text evidence="1">Secondary metabolite biosynthesis; terpenoid biosynthesis.</text>
</comment>
<comment type="subunit">
    <text evidence="2">Homodimer.</text>
</comment>
<comment type="similarity">
    <text evidence="4">Belongs to the terpene synthase family.</text>
</comment>
<comment type="caution">
    <text evidence="2">Despite its close structural homology with class I terpene cyclases, flvF lacks intact metal-binding motifs DDXX(D/E) and (N,D)D(L,I,V)X-(S,T)XXXE characteristic of all class I terpene synthases.</text>
</comment>
<reference key="1">
    <citation type="journal article" date="2015" name="Genome Announc.">
        <title>Genome sequence of Aspergillus flavus NRRL 3357, a strain that causes aflatoxin contamination of food and feed.</title>
        <authorList>
            <person name="Nierman W.C."/>
            <person name="Yu J."/>
            <person name="Fedorova-Abrams N.D."/>
            <person name="Losada L."/>
            <person name="Cleveland T.E."/>
            <person name="Bhatnagar D."/>
            <person name="Bennett J.W."/>
            <person name="Dean R."/>
            <person name="Payne G.A."/>
        </authorList>
    </citation>
    <scope>NUCLEOTIDE SEQUENCE [LARGE SCALE GENOMIC DNA]</scope>
    <source>
        <strain>ATCC 200026 / FGSC A1120 / IAM 13836 / NRRL 3357 / JCM 12722 / SRRC 167</strain>
    </source>
</reference>
<reference key="2">
    <citation type="journal article" date="2020" name="J. Am. Chem. Soc.">
        <title>Genome mining of alkaloidal terpenoids from a hybrid terpene and nonribosomal peptide biosynthetic pathway.</title>
        <authorList>
            <person name="Yee D.A."/>
            <person name="Kakule T.B."/>
            <person name="Cheng W."/>
            <person name="Chen M."/>
            <person name="Chong C.T.Y."/>
            <person name="Hai Y."/>
            <person name="Hang L.F."/>
            <person name="Hung Y.S."/>
            <person name="Liu N."/>
            <person name="Ohashi M."/>
            <person name="Okorafor I.C."/>
            <person name="Song Y."/>
            <person name="Tang M."/>
            <person name="Zhang Z."/>
            <person name="Tang Y."/>
        </authorList>
    </citation>
    <scope>FUNCTION</scope>
    <scope>CATALYTIC ACTIVITY</scope>
    <scope>PATHWAY</scope>
</reference>
<reference key="3">
    <citation type="journal article" date="2022" name="Biochemistry">
        <title>Structure of the Repurposed Fungal Terpene Cyclase FlvF Implicated in the C-N Bond-Forming Reaction of Flavunoidine Biosynthesis.</title>
        <authorList>
            <person name="Tararina M.A."/>
            <person name="Yee D.A."/>
            <person name="Tang Y."/>
            <person name="Christianson D.W."/>
        </authorList>
    </citation>
    <scope>X-RAY CRYSTALLOGRAPHY (2.6 ANGSTROMS)</scope>
    <scope>SUBUNIT</scope>
</reference>
<sequence length="366" mass="42347">MEGLRRHSVMLDCKLWKDDPIYFFKTLPPYISKYAQRADDASIQAQIDVFGKDDVGAMPGALGPRGNFAAVTFAESFPDRVAMLAYLNEVLSFYECFEKQMTEMLDATLYANPVPKDPKYDNPVWQANYKNTMTKWPKILENLDPKLGPKCVKSLVALVEGTDMEPKMAHYKTMKEYALDRTNYIAWPVACDNAEFGSQLNLTQDQLDSVRDIFLPLWTHSCYVYDYYHYDKEAEIHSTYGKGRSMINSIPLLNRLKGLSVEEAKAWLKQRCFELEKEYLQRKEDYFSENPVEAVPVDLRRWFLSQEDLATGFAIWCATTYHNHPPFGEGYAAPYEKRRKEGALWFEKVTESDQLMTGGFEVRYAN</sequence>
<name>FLVF_ASPFN</name>